<accession>P52928</accession>
<accession>Q6HTL2</accession>
<accession>Q6KMV2</accession>
<accession>Q81M59</accession>
<organism>
    <name type="scientific">Bacillus anthracis</name>
    <dbReference type="NCBI Taxonomy" id="1392"/>
    <lineage>
        <taxon>Bacteria</taxon>
        <taxon>Bacillati</taxon>
        <taxon>Bacillota</taxon>
        <taxon>Bacilli</taxon>
        <taxon>Bacillales</taxon>
        <taxon>Bacillaceae</taxon>
        <taxon>Bacillus</taxon>
        <taxon>Bacillus cereus group</taxon>
    </lineage>
</organism>
<dbReference type="EMBL" id="AE016879">
    <property type="protein sequence ID" value="AAP28110.1"/>
    <property type="molecule type" value="Genomic_DNA"/>
</dbReference>
<dbReference type="EMBL" id="AE017334">
    <property type="protein sequence ID" value="AAT33514.2"/>
    <property type="molecule type" value="Genomic_DNA"/>
</dbReference>
<dbReference type="EMBL" id="AE017225">
    <property type="protein sequence ID" value="AAT56377.1"/>
    <property type="status" value="ALT_INIT"/>
    <property type="molecule type" value="Genomic_DNA"/>
</dbReference>
<dbReference type="EMBL" id="U09970">
    <property type="protein sequence ID" value="AAA18871.1"/>
    <property type="molecule type" value="Genomic_DNA"/>
</dbReference>
<dbReference type="PIR" id="S60868">
    <property type="entry name" value="S60868"/>
</dbReference>
<dbReference type="RefSeq" id="NP_846624.1">
    <property type="nucleotide sequence ID" value="NC_003997.3"/>
</dbReference>
<dbReference type="RefSeq" id="WP_003161566.1">
    <property type="nucleotide sequence ID" value="NZ_WXXJ01000027.1"/>
</dbReference>
<dbReference type="SMR" id="P52928"/>
<dbReference type="STRING" id="261594.GBAA_4394"/>
<dbReference type="DNASU" id="1087648"/>
<dbReference type="GeneID" id="45024055"/>
<dbReference type="KEGG" id="ban:BA_4394"/>
<dbReference type="KEGG" id="bar:GBAA_4394"/>
<dbReference type="KEGG" id="bat:BAS4076"/>
<dbReference type="PATRIC" id="fig|198094.11.peg.4363"/>
<dbReference type="eggNOG" id="COG0745">
    <property type="taxonomic scope" value="Bacteria"/>
</dbReference>
<dbReference type="HOGENOM" id="CLU_072509_0_0_9"/>
<dbReference type="OrthoDB" id="9793299at2"/>
<dbReference type="Proteomes" id="UP000000427">
    <property type="component" value="Chromosome"/>
</dbReference>
<dbReference type="Proteomes" id="UP000000594">
    <property type="component" value="Chromosome"/>
</dbReference>
<dbReference type="GO" id="GO:0005737">
    <property type="term" value="C:cytoplasm"/>
    <property type="evidence" value="ECO:0007669"/>
    <property type="project" value="UniProtKB-SubCell"/>
</dbReference>
<dbReference type="GO" id="GO:0005509">
    <property type="term" value="F:calcium ion binding"/>
    <property type="evidence" value="ECO:0007669"/>
    <property type="project" value="InterPro"/>
</dbReference>
<dbReference type="GO" id="GO:0003677">
    <property type="term" value="F:DNA binding"/>
    <property type="evidence" value="ECO:0007669"/>
    <property type="project" value="UniProtKB-KW"/>
</dbReference>
<dbReference type="GO" id="GO:0003700">
    <property type="term" value="F:DNA-binding transcription factor activity"/>
    <property type="evidence" value="ECO:0007669"/>
    <property type="project" value="InterPro"/>
</dbReference>
<dbReference type="GO" id="GO:0051606">
    <property type="term" value="P:detection of stimulus"/>
    <property type="evidence" value="ECO:0007669"/>
    <property type="project" value="InterPro"/>
</dbReference>
<dbReference type="GO" id="GO:0000160">
    <property type="term" value="P:phosphorelay signal transduction system"/>
    <property type="evidence" value="ECO:0007669"/>
    <property type="project" value="UniProtKB-KW"/>
</dbReference>
<dbReference type="GO" id="GO:0042173">
    <property type="term" value="P:regulation of sporulation resulting in formation of a cellular spore"/>
    <property type="evidence" value="ECO:0007669"/>
    <property type="project" value="InterPro"/>
</dbReference>
<dbReference type="GO" id="GO:0030435">
    <property type="term" value="P:sporulation resulting in formation of a cellular spore"/>
    <property type="evidence" value="ECO:0007669"/>
    <property type="project" value="UniProtKB-KW"/>
</dbReference>
<dbReference type="CDD" id="cd17561">
    <property type="entry name" value="REC_Spo0A"/>
    <property type="match status" value="1"/>
</dbReference>
<dbReference type="FunFam" id="1.10.10.10:FF:000107">
    <property type="entry name" value="Stage 0 sporulation protein A"/>
    <property type="match status" value="1"/>
</dbReference>
<dbReference type="FunFam" id="3.40.50.2300:FF:000154">
    <property type="entry name" value="Stage 0 sporulation protein A"/>
    <property type="match status" value="1"/>
</dbReference>
<dbReference type="Gene3D" id="3.40.50.2300">
    <property type="match status" value="1"/>
</dbReference>
<dbReference type="Gene3D" id="1.10.10.10">
    <property type="entry name" value="Winged helix-like DNA-binding domain superfamily/Winged helix DNA-binding domain"/>
    <property type="match status" value="1"/>
</dbReference>
<dbReference type="InterPro" id="IPR011006">
    <property type="entry name" value="CheY-like_superfamily"/>
</dbReference>
<dbReference type="InterPro" id="IPR016032">
    <property type="entry name" value="Sig_transdc_resp-reg_C-effctor"/>
</dbReference>
<dbReference type="InterPro" id="IPR001789">
    <property type="entry name" value="Sig_transdc_resp-reg_receiver"/>
</dbReference>
<dbReference type="InterPro" id="IPR014879">
    <property type="entry name" value="Spo0A_C"/>
</dbReference>
<dbReference type="InterPro" id="IPR012052">
    <property type="entry name" value="Spore_0_A"/>
</dbReference>
<dbReference type="InterPro" id="IPR052048">
    <property type="entry name" value="ST_Response_Regulator"/>
</dbReference>
<dbReference type="InterPro" id="IPR036388">
    <property type="entry name" value="WH-like_DNA-bd_sf"/>
</dbReference>
<dbReference type="NCBIfam" id="TIGR02875">
    <property type="entry name" value="spore_0_A"/>
    <property type="match status" value="1"/>
</dbReference>
<dbReference type="PANTHER" id="PTHR43228:SF5">
    <property type="entry name" value="STAGE 0 SPORULATION PROTEIN A"/>
    <property type="match status" value="1"/>
</dbReference>
<dbReference type="PANTHER" id="PTHR43228">
    <property type="entry name" value="TWO-COMPONENT RESPONSE REGULATOR"/>
    <property type="match status" value="1"/>
</dbReference>
<dbReference type="Pfam" id="PF00072">
    <property type="entry name" value="Response_reg"/>
    <property type="match status" value="1"/>
</dbReference>
<dbReference type="Pfam" id="PF08769">
    <property type="entry name" value="Spo0A_C"/>
    <property type="match status" value="1"/>
</dbReference>
<dbReference type="PIRSF" id="PIRSF002937">
    <property type="entry name" value="Res_reg_Spo0A"/>
    <property type="match status" value="1"/>
</dbReference>
<dbReference type="SMART" id="SM00448">
    <property type="entry name" value="REC"/>
    <property type="match status" value="1"/>
</dbReference>
<dbReference type="SUPFAM" id="SSF46894">
    <property type="entry name" value="C-terminal effector domain of the bipartite response regulators"/>
    <property type="match status" value="1"/>
</dbReference>
<dbReference type="SUPFAM" id="SSF52172">
    <property type="entry name" value="CheY-like"/>
    <property type="match status" value="1"/>
</dbReference>
<dbReference type="PROSITE" id="PS50110">
    <property type="entry name" value="RESPONSE_REGULATORY"/>
    <property type="match status" value="1"/>
</dbReference>
<proteinExistence type="inferred from homology"/>
<reference key="1">
    <citation type="journal article" date="2003" name="Nature">
        <title>The genome sequence of Bacillus anthracis Ames and comparison to closely related bacteria.</title>
        <authorList>
            <person name="Read T.D."/>
            <person name="Peterson S.N."/>
            <person name="Tourasse N.J."/>
            <person name="Baillie L.W."/>
            <person name="Paulsen I.T."/>
            <person name="Nelson K.E."/>
            <person name="Tettelin H."/>
            <person name="Fouts D.E."/>
            <person name="Eisen J.A."/>
            <person name="Gill S.R."/>
            <person name="Holtzapple E.K."/>
            <person name="Okstad O.A."/>
            <person name="Helgason E."/>
            <person name="Rilstone J."/>
            <person name="Wu M."/>
            <person name="Kolonay J.F."/>
            <person name="Beanan M.J."/>
            <person name="Dodson R.J."/>
            <person name="Brinkac L.M."/>
            <person name="Gwinn M.L."/>
            <person name="DeBoy R.T."/>
            <person name="Madpu R."/>
            <person name="Daugherty S.C."/>
            <person name="Durkin A.S."/>
            <person name="Haft D.H."/>
            <person name="Nelson W.C."/>
            <person name="Peterson J.D."/>
            <person name="Pop M."/>
            <person name="Khouri H.M."/>
            <person name="Radune D."/>
            <person name="Benton J.L."/>
            <person name="Mahamoud Y."/>
            <person name="Jiang L."/>
            <person name="Hance I.R."/>
            <person name="Weidman J.F."/>
            <person name="Berry K.J."/>
            <person name="Plaut R.D."/>
            <person name="Wolf A.M."/>
            <person name="Watkins K.L."/>
            <person name="Nierman W.C."/>
            <person name="Hazen A."/>
            <person name="Cline R.T."/>
            <person name="Redmond C."/>
            <person name="Thwaite J.E."/>
            <person name="White O."/>
            <person name="Salzberg S.L."/>
            <person name="Thomason B."/>
            <person name="Friedlander A.M."/>
            <person name="Koehler T.M."/>
            <person name="Hanna P.C."/>
            <person name="Kolstoe A.-B."/>
            <person name="Fraser C.M."/>
        </authorList>
    </citation>
    <scope>NUCLEOTIDE SEQUENCE [LARGE SCALE GENOMIC DNA]</scope>
    <source>
        <strain>Ames / isolate Porton</strain>
    </source>
</reference>
<reference key="2">
    <citation type="journal article" date="2009" name="J. Bacteriol.">
        <title>The complete genome sequence of Bacillus anthracis Ames 'Ancestor'.</title>
        <authorList>
            <person name="Ravel J."/>
            <person name="Jiang L."/>
            <person name="Stanley S.T."/>
            <person name="Wilson M.R."/>
            <person name="Decker R.S."/>
            <person name="Read T.D."/>
            <person name="Worsham P."/>
            <person name="Keim P.S."/>
            <person name="Salzberg S.L."/>
            <person name="Fraser-Liggett C.M."/>
            <person name="Rasko D.A."/>
        </authorList>
    </citation>
    <scope>NUCLEOTIDE SEQUENCE [LARGE SCALE GENOMIC DNA]</scope>
    <source>
        <strain>Ames ancestor</strain>
    </source>
</reference>
<reference key="3">
    <citation type="submission" date="2004-01" db="EMBL/GenBank/DDBJ databases">
        <title>Complete genome sequence of Bacillus anthracis Sterne.</title>
        <authorList>
            <person name="Brettin T.S."/>
            <person name="Bruce D."/>
            <person name="Challacombe J.F."/>
            <person name="Gilna P."/>
            <person name="Han C."/>
            <person name="Hill K."/>
            <person name="Hitchcock P."/>
            <person name="Jackson P."/>
            <person name="Keim P."/>
            <person name="Longmire J."/>
            <person name="Lucas S."/>
            <person name="Okinaka R."/>
            <person name="Richardson P."/>
            <person name="Rubin E."/>
            <person name="Tice H."/>
        </authorList>
    </citation>
    <scope>NUCLEOTIDE SEQUENCE [LARGE SCALE GENOMIC DNA]</scope>
    <source>
        <strain>Sterne</strain>
    </source>
</reference>
<reference key="4">
    <citation type="journal article" date="1994" name="Mol. Microbiol.">
        <title>Characterization of spo0A homologues in diverse Bacillus and Clostridium species identifies a probable DNA-binding domain.</title>
        <authorList>
            <person name="Brown D.P."/>
            <person name="Ganova-Raeva L."/>
            <person name="Green B.D."/>
            <person name="Wilkinson S.R."/>
            <person name="Young M."/>
            <person name="Youngman P."/>
        </authorList>
    </citation>
    <scope>NUCLEOTIDE SEQUENCE [GENOMIC DNA] OF 1-214</scope>
    <source>
        <strain>UM23-C1</strain>
    </source>
</reference>
<keyword id="KW-0010">Activator</keyword>
<keyword id="KW-0106">Calcium</keyword>
<keyword id="KW-0963">Cytoplasm</keyword>
<keyword id="KW-0238">DNA-binding</keyword>
<keyword id="KW-0479">Metal-binding</keyword>
<keyword id="KW-0597">Phosphoprotein</keyword>
<keyword id="KW-1185">Reference proteome</keyword>
<keyword id="KW-0678">Repressor</keyword>
<keyword id="KW-0749">Sporulation</keyword>
<keyword id="KW-0804">Transcription</keyword>
<keyword id="KW-0805">Transcription regulation</keyword>
<keyword id="KW-0902">Two-component regulatory system</keyword>
<sequence>MEKIKVCLVDDNKELVSMLESYVAAQDDMEVIGTAYNGQECLNLLKDKQPDVLVLDIIMPHLDGLAVLEKMRHIERLRQPSVIMLTAFGQEDVTKKAVDLGASYFILKPFDMENLTSHIRQVSGKANATIKRPLPSFRSATTVDGKPKNLDASITSIIHEIGVPAHIKGYMYLREAISMVYNDIELLGSITKVLYPDIAKKYNTTASRVERAIRHAIEVAWSRGNIDSISSLFGYTVSMSKAKPTNSEFIAMVADKLRLEHKAS</sequence>
<comment type="function">
    <text evidence="1">May play the central regulatory role in sporulation. It may be an element of the effector pathway responsible for the activation of sporulation genes in response to nutritional stress. Spo0A may act in concert with Spo0H (a sigma factor) to control the expression of some genes that are critical to the sporulation process. Repressor of abrB, activator of the spoIIa operon. Binds the DNA sequence 5'-TGNCGAA-3' (0A box) (By similarity).</text>
</comment>
<comment type="cofactor">
    <cofactor evidence="1">
        <name>Ca(2+)</name>
        <dbReference type="ChEBI" id="CHEBI:29108"/>
    </cofactor>
    <text evidence="1">Binds 1 Ca(2+) ion per subunit.</text>
</comment>
<comment type="subcellular location">
    <subcellularLocation>
        <location evidence="4">Cytoplasm</location>
    </subcellularLocation>
</comment>
<comment type="PTM">
    <text evidence="1">Phosphorylated by KinA and KinB.</text>
</comment>
<comment type="sequence caution" evidence="4">
    <conflict type="erroneous initiation">
        <sequence resource="EMBL-CDS" id="AAT56377"/>
    </conflict>
</comment>
<gene>
    <name type="primary">spo0A</name>
    <name type="ordered locus">BA_4394</name>
    <name type="ordered locus">GBAA_4394</name>
    <name type="ordered locus">BAS4076</name>
</gene>
<protein>
    <recommendedName>
        <fullName>Stage 0 sporulation protein A</fullName>
    </recommendedName>
</protein>
<feature type="chain" id="PRO_0000081226" description="Stage 0 sporulation protein A">
    <location>
        <begin position="1"/>
        <end position="264"/>
    </location>
</feature>
<feature type="domain" description="Response regulatory" evidence="3">
    <location>
        <begin position="5"/>
        <end position="123"/>
    </location>
</feature>
<feature type="DNA-binding region" description="H-T-H motif" evidence="2">
    <location>
        <begin position="196"/>
        <end position="215"/>
    </location>
</feature>
<feature type="binding site" evidence="1">
    <location>
        <position position="10"/>
    </location>
    <ligand>
        <name>Ca(2+)</name>
        <dbReference type="ChEBI" id="CHEBI:29108"/>
    </ligand>
</feature>
<feature type="binding site" evidence="1">
    <location>
        <position position="11"/>
    </location>
    <ligand>
        <name>Ca(2+)</name>
        <dbReference type="ChEBI" id="CHEBI:29108"/>
    </ligand>
</feature>
<feature type="binding site" evidence="1">
    <location>
        <position position="56"/>
    </location>
    <ligand>
        <name>Ca(2+)</name>
        <dbReference type="ChEBI" id="CHEBI:29108"/>
    </ligand>
</feature>
<feature type="modified residue" description="4-aspartylphosphate" evidence="3">
    <location>
        <position position="56"/>
    </location>
</feature>
<feature type="sequence conflict" description="In Ref. 4; AAA18871." evidence="4" ref="4">
    <original>Y</original>
    <variation>C</variation>
    <location>
        <position position="22"/>
    </location>
</feature>
<name>SP0A_BACAN</name>
<evidence type="ECO:0000250" key="1"/>
<evidence type="ECO:0000255" key="2"/>
<evidence type="ECO:0000255" key="3">
    <source>
        <dbReference type="PROSITE-ProRule" id="PRU00169"/>
    </source>
</evidence>
<evidence type="ECO:0000305" key="4"/>